<gene>
    <name evidence="1" type="primary">dapF</name>
    <name type="ordered locus">Maeo_0204</name>
</gene>
<comment type="function">
    <text evidence="1">Catalyzes the stereoinversion of LL-2,6-diaminopimelate (L,L-DAP) to meso-diaminopimelate (meso-DAP), a precursor of L-lysine.</text>
</comment>
<comment type="catalytic activity">
    <reaction evidence="1">
        <text>(2S,6S)-2,6-diaminopimelate = meso-2,6-diaminopimelate</text>
        <dbReference type="Rhea" id="RHEA:15393"/>
        <dbReference type="ChEBI" id="CHEBI:57609"/>
        <dbReference type="ChEBI" id="CHEBI:57791"/>
        <dbReference type="EC" id="5.1.1.7"/>
    </reaction>
</comment>
<comment type="pathway">
    <text evidence="1">Amino-acid biosynthesis; L-lysine biosynthesis via DAP pathway; DL-2,6-diaminopimelate from LL-2,6-diaminopimelate: step 1/1.</text>
</comment>
<comment type="subunit">
    <text evidence="1">Homodimer.</text>
</comment>
<comment type="subcellular location">
    <subcellularLocation>
        <location evidence="1">Cytoplasm</location>
    </subcellularLocation>
</comment>
<comment type="similarity">
    <text evidence="1">Belongs to the diaminopimelate epimerase family.</text>
</comment>
<feature type="chain" id="PRO_1000011903" description="Diaminopimelate epimerase">
    <location>
        <begin position="1"/>
        <end position="295"/>
    </location>
</feature>
<feature type="active site" description="Proton donor" evidence="1">
    <location>
        <position position="78"/>
    </location>
</feature>
<feature type="active site" description="Proton acceptor" evidence="1">
    <location>
        <position position="239"/>
    </location>
</feature>
<feature type="binding site" evidence="1">
    <location>
        <position position="13"/>
    </location>
    <ligand>
        <name>substrate</name>
    </ligand>
</feature>
<feature type="binding site" evidence="1">
    <location>
        <position position="69"/>
    </location>
    <ligand>
        <name>substrate</name>
    </ligand>
</feature>
<feature type="binding site" evidence="1">
    <location>
        <begin position="79"/>
        <end position="80"/>
    </location>
    <ligand>
        <name>substrate</name>
    </ligand>
</feature>
<feature type="binding site" evidence="1">
    <location>
        <position position="173"/>
    </location>
    <ligand>
        <name>substrate</name>
    </ligand>
</feature>
<feature type="binding site" evidence="1">
    <location>
        <position position="212"/>
    </location>
    <ligand>
        <name>substrate</name>
    </ligand>
</feature>
<feature type="binding site" evidence="1">
    <location>
        <begin position="230"/>
        <end position="231"/>
    </location>
    <ligand>
        <name>substrate</name>
    </ligand>
</feature>
<feature type="binding site" evidence="1">
    <location>
        <begin position="240"/>
        <end position="241"/>
    </location>
    <ligand>
        <name>substrate</name>
    </ligand>
</feature>
<feature type="site" description="Could be important to modulate the pK values of the two catalytic cysteine residues" evidence="1">
    <location>
        <position position="175"/>
    </location>
</feature>
<feature type="site" description="Could be important to modulate the pK values of the two catalytic cysteine residues" evidence="1">
    <location>
        <position position="230"/>
    </location>
</feature>
<sequence>MGLNFTKMHGLGNDYIVINEFDGEKIKEDEKAEFSKKICKRGFSIGADGVIFVQPATDEKYDIRFRIFNSDGSEAEMCGNGIRCFSKFVYERVMQKNPLNVETMGGLRVSEMNIENNIVKSIKVFMGAPTFELKDIPMVVEGKSENDVFLDEEIELKNALLNSVKLSVVNVGNPHAVIFMKDNNLKAPFIRTHLNILGKEIEHHSVFPEKINVHFVEIVNPQEIKIITWERGAGYTTACGTGTTSSVIIANKLGKTGNKVLAHLDGGDLEIEIKEDGVYMEGDAVIVYDGELYQY</sequence>
<evidence type="ECO:0000255" key="1">
    <source>
        <dbReference type="HAMAP-Rule" id="MF_00197"/>
    </source>
</evidence>
<dbReference type="EC" id="5.1.1.7" evidence="1"/>
<dbReference type="EMBL" id="CP000743">
    <property type="protein sequence ID" value="ABR55796.1"/>
    <property type="molecule type" value="Genomic_DNA"/>
</dbReference>
<dbReference type="RefSeq" id="WP_011972928.1">
    <property type="nucleotide sequence ID" value="NC_009635.1"/>
</dbReference>
<dbReference type="SMR" id="A6UTH4"/>
<dbReference type="STRING" id="419665.Maeo_0204"/>
<dbReference type="GeneID" id="5326820"/>
<dbReference type="GeneID" id="75305565"/>
<dbReference type="KEGG" id="mae:Maeo_0204"/>
<dbReference type="eggNOG" id="arCOG02255">
    <property type="taxonomic scope" value="Archaea"/>
</dbReference>
<dbReference type="HOGENOM" id="CLU_053306_3_0_2"/>
<dbReference type="OrthoDB" id="358699at2157"/>
<dbReference type="UniPathway" id="UPA00034">
    <property type="reaction ID" value="UER00025"/>
</dbReference>
<dbReference type="Proteomes" id="UP000001106">
    <property type="component" value="Chromosome"/>
</dbReference>
<dbReference type="GO" id="GO:0005829">
    <property type="term" value="C:cytosol"/>
    <property type="evidence" value="ECO:0007669"/>
    <property type="project" value="TreeGrafter"/>
</dbReference>
<dbReference type="GO" id="GO:0008837">
    <property type="term" value="F:diaminopimelate epimerase activity"/>
    <property type="evidence" value="ECO:0007669"/>
    <property type="project" value="UniProtKB-UniRule"/>
</dbReference>
<dbReference type="GO" id="GO:0009089">
    <property type="term" value="P:lysine biosynthetic process via diaminopimelate"/>
    <property type="evidence" value="ECO:0007669"/>
    <property type="project" value="UniProtKB-UniRule"/>
</dbReference>
<dbReference type="FunFam" id="3.10.310.10:FF:000001">
    <property type="entry name" value="Diaminopimelate epimerase"/>
    <property type="match status" value="1"/>
</dbReference>
<dbReference type="Gene3D" id="3.10.310.10">
    <property type="entry name" value="Diaminopimelate Epimerase, Chain A, domain 1"/>
    <property type="match status" value="2"/>
</dbReference>
<dbReference type="HAMAP" id="MF_00197">
    <property type="entry name" value="DAP_epimerase"/>
    <property type="match status" value="1"/>
</dbReference>
<dbReference type="InterPro" id="IPR018510">
    <property type="entry name" value="DAP_epimerase_AS"/>
</dbReference>
<dbReference type="InterPro" id="IPR001653">
    <property type="entry name" value="DAP_epimerase_DapF"/>
</dbReference>
<dbReference type="NCBIfam" id="TIGR00652">
    <property type="entry name" value="DapF"/>
    <property type="match status" value="1"/>
</dbReference>
<dbReference type="PANTHER" id="PTHR31689:SF0">
    <property type="entry name" value="DIAMINOPIMELATE EPIMERASE"/>
    <property type="match status" value="1"/>
</dbReference>
<dbReference type="PANTHER" id="PTHR31689">
    <property type="entry name" value="DIAMINOPIMELATE EPIMERASE, CHLOROPLASTIC"/>
    <property type="match status" value="1"/>
</dbReference>
<dbReference type="Pfam" id="PF01678">
    <property type="entry name" value="DAP_epimerase"/>
    <property type="match status" value="2"/>
</dbReference>
<dbReference type="SUPFAM" id="SSF54506">
    <property type="entry name" value="Diaminopimelate epimerase-like"/>
    <property type="match status" value="2"/>
</dbReference>
<dbReference type="PROSITE" id="PS01326">
    <property type="entry name" value="DAP_EPIMERASE"/>
    <property type="match status" value="1"/>
</dbReference>
<organism>
    <name type="scientific">Methanococcus aeolicus (strain ATCC BAA-1280 / DSM 17508 / OCM 812 / Nankai-3)</name>
    <dbReference type="NCBI Taxonomy" id="419665"/>
    <lineage>
        <taxon>Archaea</taxon>
        <taxon>Methanobacteriati</taxon>
        <taxon>Methanobacteriota</taxon>
        <taxon>Methanomada group</taxon>
        <taxon>Methanococci</taxon>
        <taxon>Methanococcales</taxon>
        <taxon>Methanococcaceae</taxon>
        <taxon>Methanococcus</taxon>
    </lineage>
</organism>
<proteinExistence type="inferred from homology"/>
<accession>A6UTH4</accession>
<reference key="1">
    <citation type="submission" date="2007-06" db="EMBL/GenBank/DDBJ databases">
        <title>Complete sequence of Methanococcus aeolicus Nankai-3.</title>
        <authorList>
            <consortium name="US DOE Joint Genome Institute"/>
            <person name="Copeland A."/>
            <person name="Lucas S."/>
            <person name="Lapidus A."/>
            <person name="Barry K."/>
            <person name="Glavina del Rio T."/>
            <person name="Dalin E."/>
            <person name="Tice H."/>
            <person name="Pitluck S."/>
            <person name="Chain P."/>
            <person name="Malfatti S."/>
            <person name="Shin M."/>
            <person name="Vergez L."/>
            <person name="Schmutz J."/>
            <person name="Larimer F."/>
            <person name="Land M."/>
            <person name="Hauser L."/>
            <person name="Kyrpides N."/>
            <person name="Lykidis A."/>
            <person name="Sieprawska-Lupa M."/>
            <person name="Whitman W.B."/>
            <person name="Richardson P."/>
        </authorList>
    </citation>
    <scope>NUCLEOTIDE SEQUENCE [LARGE SCALE GENOMIC DNA]</scope>
    <source>
        <strain>ATCC BAA-1280 / DSM 17508 / OCM 812 / Nankai-3</strain>
    </source>
</reference>
<keyword id="KW-0028">Amino-acid biosynthesis</keyword>
<keyword id="KW-0963">Cytoplasm</keyword>
<keyword id="KW-0413">Isomerase</keyword>
<keyword id="KW-0457">Lysine biosynthesis</keyword>
<name>DAPF_META3</name>
<protein>
    <recommendedName>
        <fullName evidence="1">Diaminopimelate epimerase</fullName>
        <shortName evidence="1">DAP epimerase</shortName>
        <ecNumber evidence="1">5.1.1.7</ecNumber>
    </recommendedName>
    <alternativeName>
        <fullName evidence="1">PLP-independent amino acid racemase</fullName>
    </alternativeName>
</protein>